<organism>
    <name type="scientific">Lupinus albus</name>
    <name type="common">White lupine</name>
    <name type="synonym">Lupinus termis</name>
    <dbReference type="NCBI Taxonomy" id="3870"/>
    <lineage>
        <taxon>Eukaryota</taxon>
        <taxon>Viridiplantae</taxon>
        <taxon>Streptophyta</taxon>
        <taxon>Embryophyta</taxon>
        <taxon>Tracheophyta</taxon>
        <taxon>Spermatophyta</taxon>
        <taxon>Magnoliopsida</taxon>
        <taxon>eudicotyledons</taxon>
        <taxon>Gunneridae</taxon>
        <taxon>Pentapetalae</taxon>
        <taxon>rosids</taxon>
        <taxon>fabids</taxon>
        <taxon>Fabales</taxon>
        <taxon>Fabaceae</taxon>
        <taxon>Papilionoideae</taxon>
        <taxon>50 kb inversion clade</taxon>
        <taxon>genistoids sensu lato</taxon>
        <taxon>core genistoids</taxon>
        <taxon>Genisteae</taxon>
        <taxon>Lupinus</taxon>
    </lineage>
</organism>
<protein>
    <recommendedName>
        <fullName evidence="5">Bowman-Birk type proteinase inhibitor</fullName>
        <shortName evidence="5">LaBBI</shortName>
    </recommendedName>
</protein>
<evidence type="ECO:0000250" key="1">
    <source>
        <dbReference type="UniProtKB" id="P01055"/>
    </source>
</evidence>
<evidence type="ECO:0000250" key="2">
    <source>
        <dbReference type="UniProtKB" id="P80321"/>
    </source>
</evidence>
<evidence type="ECO:0000255" key="3"/>
<evidence type="ECO:0000269" key="4">
    <source>
    </source>
</evidence>
<evidence type="ECO:0000303" key="5">
    <source>
    </source>
</evidence>
<evidence type="ECO:0000305" key="6"/>
<accession>P85172</accession>
<reference evidence="6" key="1">
    <citation type="journal article" date="2008" name="Phytochemistry">
        <title>Identification and characterization of a Bowman-Birk inhibitor active towards trypsin but not chymotrypsin in Lupinus albus seeds.</title>
        <authorList>
            <person name="Scarafoni A."/>
            <person name="Consonni A."/>
            <person name="Galbusera V."/>
            <person name="Negri A."/>
            <person name="Tedeschi G."/>
            <person name="Rasmussen P."/>
            <person name="Magni C."/>
            <person name="Duranti M."/>
        </authorList>
    </citation>
    <scope>PROTEIN SEQUENCE</scope>
    <scope>FUNCTION</scope>
    <scope>BIOPHYSICOCHEMICAL PROPERTIES</scope>
    <scope>SUBUNIT</scope>
    <scope>MASS SPECTROMETRY</scope>
    <scope>VARIANT SER-63 DEL</scope>
    <source>
        <strain evidence="4">cv. Multitalia</strain>
        <tissue evidence="4">Seed</tissue>
    </source>
</reference>
<name>IBB1_LUPAL</name>
<sequence length="63" mass="6872">SLASKPCCDSCLCTRSIPPQCRCTDIGETCHSACKSCICTRSFPPQCRCSDITHFCYKPCTSS</sequence>
<comment type="function">
    <text evidence="4">Inhibits trypsin stoichiometrically at the molar ratio of 1:2, with a dissociation constant of 4.2 nM. Does not inhibit chymotrypsin.</text>
</comment>
<comment type="biophysicochemical properties">
    <phDependence>
        <text evidence="4">Stable at low pH.</text>
    </phDependence>
    <temperatureDependence>
        <text evidence="4">Thermostable.</text>
    </temperatureDependence>
</comment>
<comment type="subunit">
    <text evidence="4">Monomer.</text>
</comment>
<comment type="mass spectrometry" mass="6858.47" method="MALDI" evidence="4"/>
<comment type="similarity">
    <text evidence="3">Belongs to the Bowman-Birk serine protease inhibitor family.</text>
</comment>
<feature type="chain" id="PRO_0000292940" description="Bowman-Birk type proteinase inhibitor">
    <location>
        <begin position="1"/>
        <end position="63"/>
    </location>
</feature>
<feature type="site" description="Reactive bond for trypsin" evidence="2">
    <location>
        <begin position="15"/>
        <end position="16"/>
    </location>
</feature>
<feature type="site" description="Reactive bond for trypsin" evidence="2">
    <location>
        <begin position="41"/>
        <end position="42"/>
    </location>
</feature>
<feature type="disulfide bond" evidence="1">
    <location>
        <begin position="7"/>
        <end position="60"/>
    </location>
</feature>
<feature type="disulfide bond" evidence="1">
    <location>
        <begin position="8"/>
        <end position="23"/>
    </location>
</feature>
<feature type="disulfide bond" evidence="1">
    <location>
        <begin position="11"/>
        <end position="56"/>
    </location>
</feature>
<feature type="disulfide bond" evidence="1">
    <location>
        <begin position="13"/>
        <end position="21"/>
    </location>
</feature>
<feature type="disulfide bond" evidence="1">
    <location>
        <begin position="30"/>
        <end position="37"/>
    </location>
</feature>
<feature type="disulfide bond" evidence="1">
    <location>
        <begin position="34"/>
        <end position="49"/>
    </location>
</feature>
<feature type="disulfide bond" evidence="1">
    <location>
        <begin position="39"/>
        <end position="47"/>
    </location>
</feature>
<feature type="sequence variant" description="In minor form." evidence="4">
    <location>
        <position position="63"/>
    </location>
</feature>
<dbReference type="SMR" id="P85172"/>
<dbReference type="MEROPS" id="I12.018"/>
<dbReference type="GO" id="GO:0005576">
    <property type="term" value="C:extracellular region"/>
    <property type="evidence" value="ECO:0007669"/>
    <property type="project" value="InterPro"/>
</dbReference>
<dbReference type="GO" id="GO:0004867">
    <property type="term" value="F:serine-type endopeptidase inhibitor activity"/>
    <property type="evidence" value="ECO:0007669"/>
    <property type="project" value="UniProtKB-KW"/>
</dbReference>
<dbReference type="CDD" id="cd00023">
    <property type="entry name" value="BBI"/>
    <property type="match status" value="1"/>
</dbReference>
<dbReference type="FunFam" id="2.10.69.10:FF:000001">
    <property type="entry name" value="Bowman-Birk type proteinase inhibitor"/>
    <property type="match status" value="1"/>
</dbReference>
<dbReference type="Gene3D" id="2.10.69.10">
    <property type="entry name" value="Cysteine Protease (Bromelain) Inhibitor, subunit H"/>
    <property type="match status" value="1"/>
</dbReference>
<dbReference type="InterPro" id="IPR035995">
    <property type="entry name" value="Bowman-Birk_prot_inh"/>
</dbReference>
<dbReference type="InterPro" id="IPR000877">
    <property type="entry name" value="Prot_inh_BBI"/>
</dbReference>
<dbReference type="PANTHER" id="PTHR33479">
    <property type="entry name" value="BOWMAN-BIRK TYPE BRAN TRYPSIN INHIBITOR"/>
    <property type="match status" value="1"/>
</dbReference>
<dbReference type="PANTHER" id="PTHR33479:SF18">
    <property type="entry name" value="INHIBITOR, PUTATIVE-RELATED"/>
    <property type="match status" value="1"/>
</dbReference>
<dbReference type="Pfam" id="PF00228">
    <property type="entry name" value="Bowman-Birk_leg"/>
    <property type="match status" value="2"/>
</dbReference>
<dbReference type="SMART" id="SM00269">
    <property type="entry name" value="BowB"/>
    <property type="match status" value="1"/>
</dbReference>
<dbReference type="SUPFAM" id="SSF57247">
    <property type="entry name" value="Bowman-Birk inhibitor, BBI"/>
    <property type="match status" value="1"/>
</dbReference>
<dbReference type="PROSITE" id="PS00281">
    <property type="entry name" value="BOWMAN_BIRK"/>
    <property type="match status" value="1"/>
</dbReference>
<proteinExistence type="evidence at protein level"/>
<keyword id="KW-0903">Direct protein sequencing</keyword>
<keyword id="KW-1015">Disulfide bond</keyword>
<keyword id="KW-0646">Protease inhibitor</keyword>
<keyword id="KW-0722">Serine protease inhibitor</keyword>